<reference key="1">
    <citation type="journal article" date="2012" name="MBio">
        <title>Comparative genome analysis of Trichophyton rubrum and related dermatophytes reveals candidate genes involved in infection.</title>
        <authorList>
            <person name="Martinez D.A."/>
            <person name="Oliver B.G."/>
            <person name="Graeser Y."/>
            <person name="Goldberg J.M."/>
            <person name="Li W."/>
            <person name="Martinez-Rossi N.M."/>
            <person name="Monod M."/>
            <person name="Shelest E."/>
            <person name="Barton R.C."/>
            <person name="Birch E."/>
            <person name="Brakhage A.A."/>
            <person name="Chen Z."/>
            <person name="Gurr S.J."/>
            <person name="Heiman D."/>
            <person name="Heitman J."/>
            <person name="Kosti I."/>
            <person name="Rossi A."/>
            <person name="Saif S."/>
            <person name="Samalova M."/>
            <person name="Saunders C.W."/>
            <person name="Shea T."/>
            <person name="Summerbell R.C."/>
            <person name="Xu J."/>
            <person name="Young S."/>
            <person name="Zeng Q."/>
            <person name="Birren B.W."/>
            <person name="Cuomo C.A."/>
            <person name="White T.C."/>
        </authorList>
    </citation>
    <scope>NUCLEOTIDE SEQUENCE [LARGE SCALE GENOMIC DNA]</scope>
    <source>
        <strain>ATCC MYA-4604 / CBS 118893</strain>
    </source>
</reference>
<evidence type="ECO:0000255" key="1">
    <source>
        <dbReference type="HAMAP-Rule" id="MF_03175"/>
    </source>
</evidence>
<evidence type="ECO:0000256" key="2">
    <source>
        <dbReference type="SAM" id="MobiDB-lite"/>
    </source>
</evidence>
<feature type="chain" id="PRO_0000407596" description="Methionine aminopeptidase 2-2">
    <location>
        <begin position="1"/>
        <end position="449"/>
    </location>
</feature>
<feature type="region of interest" description="Disordered" evidence="2">
    <location>
        <begin position="1"/>
        <end position="91"/>
    </location>
</feature>
<feature type="compositionally biased region" description="Polar residues" evidence="2">
    <location>
        <begin position="15"/>
        <end position="28"/>
    </location>
</feature>
<feature type="compositionally biased region" description="Acidic residues" evidence="2">
    <location>
        <begin position="34"/>
        <end position="50"/>
    </location>
</feature>
<feature type="compositionally biased region" description="Basic residues" evidence="2">
    <location>
        <begin position="61"/>
        <end position="75"/>
    </location>
</feature>
<feature type="binding site" evidence="1">
    <location>
        <position position="199"/>
    </location>
    <ligand>
        <name>substrate</name>
    </ligand>
</feature>
<feature type="binding site" evidence="1">
    <location>
        <position position="219"/>
    </location>
    <ligand>
        <name>a divalent metal cation</name>
        <dbReference type="ChEBI" id="CHEBI:60240"/>
        <label>1</label>
    </ligand>
</feature>
<feature type="binding site" evidence="1">
    <location>
        <position position="230"/>
    </location>
    <ligand>
        <name>a divalent metal cation</name>
        <dbReference type="ChEBI" id="CHEBI:60240"/>
        <label>1</label>
    </ligand>
</feature>
<feature type="binding site" evidence="1">
    <location>
        <position position="230"/>
    </location>
    <ligand>
        <name>a divalent metal cation</name>
        <dbReference type="ChEBI" id="CHEBI:60240"/>
        <label>2</label>
        <note>catalytic</note>
    </ligand>
</feature>
<feature type="binding site" evidence="1">
    <location>
        <position position="299"/>
    </location>
    <ligand>
        <name>a divalent metal cation</name>
        <dbReference type="ChEBI" id="CHEBI:60240"/>
        <label>2</label>
        <note>catalytic</note>
    </ligand>
</feature>
<feature type="binding site" evidence="1">
    <location>
        <position position="307"/>
    </location>
    <ligand>
        <name>substrate</name>
    </ligand>
</feature>
<feature type="binding site" evidence="1">
    <location>
        <position position="335"/>
    </location>
    <ligand>
        <name>a divalent metal cation</name>
        <dbReference type="ChEBI" id="CHEBI:60240"/>
        <label>2</label>
        <note>catalytic</note>
    </ligand>
</feature>
<feature type="binding site" evidence="1">
    <location>
        <position position="430"/>
    </location>
    <ligand>
        <name>a divalent metal cation</name>
        <dbReference type="ChEBI" id="CHEBI:60240"/>
        <label>1</label>
    </ligand>
</feature>
<feature type="binding site" evidence="1">
    <location>
        <position position="430"/>
    </location>
    <ligand>
        <name>a divalent metal cation</name>
        <dbReference type="ChEBI" id="CHEBI:60240"/>
        <label>2</label>
        <note>catalytic</note>
    </ligand>
</feature>
<gene>
    <name type="ORF">MGYG_01859</name>
</gene>
<accession>E5R3Z8</accession>
<dbReference type="EC" id="3.4.11.18" evidence="1"/>
<dbReference type="EMBL" id="DS989822">
    <property type="protein sequence ID" value="EFQ98844.1"/>
    <property type="molecule type" value="Genomic_DNA"/>
</dbReference>
<dbReference type="RefSeq" id="XP_003177796.1">
    <property type="nucleotide sequence ID" value="XM_003177748.1"/>
</dbReference>
<dbReference type="SMR" id="E5R3Z8"/>
<dbReference type="FunCoup" id="E5R3Z8">
    <property type="interactions" value="1160"/>
</dbReference>
<dbReference type="STRING" id="535722.E5R3Z8"/>
<dbReference type="GeneID" id="10033131"/>
<dbReference type="VEuPathDB" id="FungiDB:MGYG_01859"/>
<dbReference type="eggNOG" id="KOG2775">
    <property type="taxonomic scope" value="Eukaryota"/>
</dbReference>
<dbReference type="HOGENOM" id="CLU_015857_7_1_1"/>
<dbReference type="InParanoid" id="E5R3Z8"/>
<dbReference type="OMA" id="PFAKRWL"/>
<dbReference type="OrthoDB" id="7848262at2759"/>
<dbReference type="Proteomes" id="UP000002669">
    <property type="component" value="Unassembled WGS sequence"/>
</dbReference>
<dbReference type="GO" id="GO:0005737">
    <property type="term" value="C:cytoplasm"/>
    <property type="evidence" value="ECO:0007669"/>
    <property type="project" value="UniProtKB-SubCell"/>
</dbReference>
<dbReference type="GO" id="GO:0004239">
    <property type="term" value="F:initiator methionyl aminopeptidase activity"/>
    <property type="evidence" value="ECO:0007669"/>
    <property type="project" value="UniProtKB-UniRule"/>
</dbReference>
<dbReference type="GO" id="GO:0046872">
    <property type="term" value="F:metal ion binding"/>
    <property type="evidence" value="ECO:0007669"/>
    <property type="project" value="UniProtKB-UniRule"/>
</dbReference>
<dbReference type="GO" id="GO:0070006">
    <property type="term" value="F:metalloaminopeptidase activity"/>
    <property type="evidence" value="ECO:0007669"/>
    <property type="project" value="UniProtKB-UniRule"/>
</dbReference>
<dbReference type="GO" id="GO:0006508">
    <property type="term" value="P:proteolysis"/>
    <property type="evidence" value="ECO:0007669"/>
    <property type="project" value="UniProtKB-KW"/>
</dbReference>
<dbReference type="CDD" id="cd01088">
    <property type="entry name" value="MetAP2"/>
    <property type="match status" value="1"/>
</dbReference>
<dbReference type="Gene3D" id="3.90.230.10">
    <property type="entry name" value="Creatinase/methionine aminopeptidase superfamily"/>
    <property type="match status" value="1"/>
</dbReference>
<dbReference type="Gene3D" id="1.10.10.10">
    <property type="entry name" value="Winged helix-like DNA-binding domain superfamily/Winged helix DNA-binding domain"/>
    <property type="match status" value="1"/>
</dbReference>
<dbReference type="HAMAP" id="MF_03175">
    <property type="entry name" value="MetAP_2_euk"/>
    <property type="match status" value="1"/>
</dbReference>
<dbReference type="InterPro" id="IPR036005">
    <property type="entry name" value="Creatinase/aminopeptidase-like"/>
</dbReference>
<dbReference type="InterPro" id="IPR050247">
    <property type="entry name" value="Met_Aminopeptidase_Type2"/>
</dbReference>
<dbReference type="InterPro" id="IPR000994">
    <property type="entry name" value="Pept_M24"/>
</dbReference>
<dbReference type="InterPro" id="IPR001714">
    <property type="entry name" value="Pept_M24_MAP"/>
</dbReference>
<dbReference type="InterPro" id="IPR002468">
    <property type="entry name" value="Pept_M24A_MAP2"/>
</dbReference>
<dbReference type="InterPro" id="IPR018349">
    <property type="entry name" value="Pept_M24A_MAP2_BS"/>
</dbReference>
<dbReference type="InterPro" id="IPR036388">
    <property type="entry name" value="WH-like_DNA-bd_sf"/>
</dbReference>
<dbReference type="InterPro" id="IPR036390">
    <property type="entry name" value="WH_DNA-bd_sf"/>
</dbReference>
<dbReference type="NCBIfam" id="TIGR00501">
    <property type="entry name" value="met_pdase_II"/>
    <property type="match status" value="1"/>
</dbReference>
<dbReference type="PANTHER" id="PTHR45777">
    <property type="entry name" value="METHIONINE AMINOPEPTIDASE 2"/>
    <property type="match status" value="1"/>
</dbReference>
<dbReference type="PANTHER" id="PTHR45777:SF2">
    <property type="entry name" value="METHIONINE AMINOPEPTIDASE 2"/>
    <property type="match status" value="1"/>
</dbReference>
<dbReference type="Pfam" id="PF00557">
    <property type="entry name" value="Peptidase_M24"/>
    <property type="match status" value="1"/>
</dbReference>
<dbReference type="PRINTS" id="PR00599">
    <property type="entry name" value="MAPEPTIDASE"/>
</dbReference>
<dbReference type="SUPFAM" id="SSF55920">
    <property type="entry name" value="Creatinase/aminopeptidase"/>
    <property type="match status" value="1"/>
</dbReference>
<dbReference type="SUPFAM" id="SSF46785">
    <property type="entry name" value="Winged helix' DNA-binding domain"/>
    <property type="match status" value="1"/>
</dbReference>
<dbReference type="PROSITE" id="PS01202">
    <property type="entry name" value="MAP_2"/>
    <property type="match status" value="1"/>
</dbReference>
<keyword id="KW-0031">Aminopeptidase</keyword>
<keyword id="KW-0963">Cytoplasm</keyword>
<keyword id="KW-0378">Hydrolase</keyword>
<keyword id="KW-0479">Metal-binding</keyword>
<keyword id="KW-0645">Protease</keyword>
<keyword id="KW-1185">Reference proteome</keyword>
<comment type="function">
    <text evidence="1">Cotranslationally removes the N-terminal methionine from nascent proteins. The N-terminal methionine is often cleaved when the second residue in the primary sequence is small and uncharged (Met-Ala-, Cys, Gly, Pro, Ser, Thr, or Val).</text>
</comment>
<comment type="catalytic activity">
    <reaction evidence="1">
        <text>Release of N-terminal amino acids, preferentially methionine, from peptides and arylamides.</text>
        <dbReference type="EC" id="3.4.11.18"/>
    </reaction>
</comment>
<comment type="cofactor">
    <cofactor evidence="1">
        <name>Co(2+)</name>
        <dbReference type="ChEBI" id="CHEBI:48828"/>
    </cofactor>
    <cofactor evidence="1">
        <name>Zn(2+)</name>
        <dbReference type="ChEBI" id="CHEBI:29105"/>
    </cofactor>
    <cofactor evidence="1">
        <name>Mn(2+)</name>
        <dbReference type="ChEBI" id="CHEBI:29035"/>
    </cofactor>
    <cofactor evidence="1">
        <name>Fe(2+)</name>
        <dbReference type="ChEBI" id="CHEBI:29033"/>
    </cofactor>
    <text evidence="1">Binds 2 divalent metal cations per subunit. Has a high-affinity and a low affinity metal-binding site. The true nature of the physiological cofactor is under debate. The enzyme is active with cobalt, zinc, manganese or divalent iron ions. Most likely, methionine aminopeptidases function as mononuclear Fe(2+)-metalloproteases under physiological conditions, and the catalytically relevant metal-binding site has been assigned to the histidine-containing high-affinity site.</text>
</comment>
<comment type="subcellular location">
    <subcellularLocation>
        <location evidence="1">Cytoplasm</location>
    </subcellularLocation>
</comment>
<comment type="similarity">
    <text evidence="1">Belongs to the peptidase M24A family. Methionine aminopeptidase eukaryotic type 2 subfamily.</text>
</comment>
<name>MAP22_ARTGP</name>
<sequence length="449" mass="49131">MAAQAAPELAKLDLNKNTGSAEASTVPASGSDKDDAENEGDSDDDRDDEQTGGSAEVNAEKKKKKKRPKKKKKTAKVQSVPPRIPLTTLFPNNSFPEGEIVEYLNENSYRTTNEEKRHLDRMNNDFLAEYRQAAEIHRQVRQYAQKELIKPGATLTDIAEGIEDGVRHLTGHLGLEEGDSLVAGMGFPTGLNINHCAAHYSPNAGNKVVLQHGDVMKVDFGVHVNGRIVDSAFTVAFDPVFDPLLTAVKEATNTGIKEAGIDVRMSDIGAAIQETMESYELELNGTSYPIKAIRNLNGHTIGQYEIHGGVNGKSVPIVKGGDQTKMEEGETYAIETFGSTGKGYVRDDMETSHYAKVPSAPSVPLRLTSAKNLYSLINKNFGTLPFCRRYLDRLGQEKYLLGLNNLVSSGLVDAYPPLCDVKGSYTAQFEHTILLRPNVKEVISRGDDY</sequence>
<proteinExistence type="inferred from homology"/>
<organism>
    <name type="scientific">Arthroderma gypseum (strain ATCC MYA-4604 / CBS 118893)</name>
    <name type="common">Microsporum gypseum</name>
    <dbReference type="NCBI Taxonomy" id="535722"/>
    <lineage>
        <taxon>Eukaryota</taxon>
        <taxon>Fungi</taxon>
        <taxon>Dikarya</taxon>
        <taxon>Ascomycota</taxon>
        <taxon>Pezizomycotina</taxon>
        <taxon>Eurotiomycetes</taxon>
        <taxon>Eurotiomycetidae</taxon>
        <taxon>Onygenales</taxon>
        <taxon>Arthrodermataceae</taxon>
        <taxon>Nannizzia</taxon>
    </lineage>
</organism>
<protein>
    <recommendedName>
        <fullName evidence="1">Methionine aminopeptidase 2-2</fullName>
        <shortName evidence="1">MAP 2-2</shortName>
        <shortName evidence="1">MetAP 2-2</shortName>
        <ecNumber evidence="1">3.4.11.18</ecNumber>
    </recommendedName>
    <alternativeName>
        <fullName evidence="1">Peptidase M</fullName>
    </alternativeName>
</protein>